<gene>
    <name type="primary">PTRH2</name>
    <name type="synonym">BIT1</name>
</gene>
<proteinExistence type="evidence at transcript level"/>
<protein>
    <recommendedName>
        <fullName>Peptidyl-tRNA hydrolase 2, mitochondrial</fullName>
        <shortName>PTH 2</shortName>
        <ecNumber evidence="2">3.1.1.29</ecNumber>
    </recommendedName>
    <alternativeName>
        <fullName>Bcl-2 inhibitor of transcription</fullName>
    </alternativeName>
</protein>
<organism>
    <name type="scientific">Bos taurus</name>
    <name type="common">Bovine</name>
    <dbReference type="NCBI Taxonomy" id="9913"/>
    <lineage>
        <taxon>Eukaryota</taxon>
        <taxon>Metazoa</taxon>
        <taxon>Chordata</taxon>
        <taxon>Craniata</taxon>
        <taxon>Vertebrata</taxon>
        <taxon>Euteleostomi</taxon>
        <taxon>Mammalia</taxon>
        <taxon>Eutheria</taxon>
        <taxon>Laurasiatheria</taxon>
        <taxon>Artiodactyla</taxon>
        <taxon>Ruminantia</taxon>
        <taxon>Pecora</taxon>
        <taxon>Bovidae</taxon>
        <taxon>Bovinae</taxon>
        <taxon>Bos</taxon>
    </lineage>
</organism>
<comment type="function">
    <text evidence="2">Peptidyl-tRNA hydrolase which releases tRNAs from the ribosome during protein synthesis. Promotes caspase-independent apoptosis by regulating the function of two transcriptional regulators, AES and TLE1.</text>
</comment>
<comment type="catalytic activity">
    <reaction evidence="2">
        <text>an N-acyl-L-alpha-aminoacyl-tRNA + H2O = an N-acyl-L-amino acid + a tRNA + H(+)</text>
        <dbReference type="Rhea" id="RHEA:54448"/>
        <dbReference type="Rhea" id="RHEA-COMP:10123"/>
        <dbReference type="Rhea" id="RHEA-COMP:13883"/>
        <dbReference type="ChEBI" id="CHEBI:15377"/>
        <dbReference type="ChEBI" id="CHEBI:15378"/>
        <dbReference type="ChEBI" id="CHEBI:59874"/>
        <dbReference type="ChEBI" id="CHEBI:78442"/>
        <dbReference type="ChEBI" id="CHEBI:138191"/>
        <dbReference type="EC" id="3.1.1.29"/>
    </reaction>
</comment>
<comment type="subunit">
    <text evidence="1">Monomer.</text>
</comment>
<comment type="subcellular location">
    <subcellularLocation>
        <location evidence="2">Mitochondrion outer membrane</location>
        <topology evidence="3">Single-pass membrane protein</topology>
    </subcellularLocation>
</comment>
<comment type="PTM">
    <text evidence="2">Ubiquitinated by PRKN during mitophagy, leading to its degradation and enhancement of mitophagy. Deubiquitinated by USP30.</text>
</comment>
<comment type="similarity">
    <text evidence="4">Belongs to the PTH2 family.</text>
</comment>
<sequence>MISRSLVMEYLTNPGALSLAAGVACGVCLGWGLRMRFGMLPKSSVRETNPDTETEASILGESGEYKMILVVRNDLKMGKGKVAAQCSHAAVSAYKQIQRRNPELLKEWEYCGQPKVVVKAPDEETLVELLTHAKVLGLTVSLIQDAGRTQIAPGSRTVLGIGPGPADLIDKVTGHLKLY</sequence>
<keyword id="KW-0378">Hydrolase</keyword>
<keyword id="KW-1017">Isopeptide bond</keyword>
<keyword id="KW-0472">Membrane</keyword>
<keyword id="KW-0496">Mitochondrion</keyword>
<keyword id="KW-1000">Mitochondrion outer membrane</keyword>
<keyword id="KW-1185">Reference proteome</keyword>
<keyword id="KW-0812">Transmembrane</keyword>
<keyword id="KW-1133">Transmembrane helix</keyword>
<keyword id="KW-0832">Ubl conjugation</keyword>
<feature type="chain" id="PRO_0000240443" description="Peptidyl-tRNA hydrolase 2, mitochondrial">
    <location>
        <begin position="1"/>
        <end position="179"/>
    </location>
</feature>
<feature type="transmembrane region" description="Helical" evidence="3">
    <location>
        <begin position="10"/>
        <end position="32"/>
    </location>
</feature>
<feature type="cross-link" description="Glycyl lysine isopeptide (Lys-Gly) (interchain with G-Cter in ubiquitin)" evidence="2">
    <location>
        <position position="76"/>
    </location>
</feature>
<feature type="cross-link" description="Glycyl lysine isopeptide (Lys-Gly) (interchain with G-Cter in ubiquitin)" evidence="2">
    <location>
        <position position="81"/>
    </location>
</feature>
<feature type="cross-link" description="Glycyl lysine isopeptide (Lys-Gly) (interchain with G-Cter in ubiquitin)" evidence="2">
    <location>
        <position position="95"/>
    </location>
</feature>
<feature type="cross-link" description="Glycyl lysine isopeptide (Lys-Gly) (interchain with G-Cter in ubiquitin)" evidence="2">
    <location>
        <position position="106"/>
    </location>
</feature>
<feature type="cross-link" description="Glycyl lysine isopeptide (Lys-Gly) (interchain with G-Cter in ubiquitin)" evidence="2">
    <location>
        <position position="115"/>
    </location>
</feature>
<feature type="cross-link" description="Glycyl lysine isopeptide (Lys-Gly) (interchain with G-Cter in ubiquitin)" evidence="2">
    <location>
        <position position="171"/>
    </location>
</feature>
<feature type="cross-link" description="Glycyl lysine isopeptide (Lys-Gly) (interchain with G-Cter in ubiquitin)" evidence="2">
    <location>
        <position position="177"/>
    </location>
</feature>
<feature type="sequence conflict" description="In Ref. 2; AAX31373." evidence="4" ref="2">
    <original>A</original>
    <variation>V</variation>
    <location>
        <position position="20"/>
    </location>
</feature>
<name>PTH2_BOVIN</name>
<evidence type="ECO:0000250" key="1"/>
<evidence type="ECO:0000250" key="2">
    <source>
        <dbReference type="UniProtKB" id="Q9Y3E5"/>
    </source>
</evidence>
<evidence type="ECO:0000255" key="3"/>
<evidence type="ECO:0000305" key="4"/>
<reference key="1">
    <citation type="submission" date="2005-10" db="EMBL/GenBank/DDBJ databases">
        <title>Expression of Bcl-2 family in bovine placenta.</title>
        <authorList>
            <person name="Ushizawa K."/>
            <person name="Takahashi T."/>
            <person name="Hosoe M."/>
            <person name="Hashizume K."/>
        </authorList>
    </citation>
    <scope>NUCLEOTIDE SEQUENCE [MRNA]</scope>
    <source>
        <tissue>Placenta</tissue>
    </source>
</reference>
<reference key="2">
    <citation type="journal article" date="2005" name="BMC Genomics">
        <title>Characterization of 954 bovine full-CDS cDNA sequences.</title>
        <authorList>
            <person name="Harhay G.P."/>
            <person name="Sonstegard T.S."/>
            <person name="Keele J.W."/>
            <person name="Heaton M.P."/>
            <person name="Clawson M.L."/>
            <person name="Snelling W.M."/>
            <person name="Wiedmann R.T."/>
            <person name="Van Tassell C.P."/>
            <person name="Smith T.P.L."/>
        </authorList>
    </citation>
    <scope>NUCLEOTIDE SEQUENCE [LARGE SCALE MRNA]</scope>
</reference>
<reference key="3">
    <citation type="submission" date="2005-08" db="EMBL/GenBank/DDBJ databases">
        <authorList>
            <consortium name="NIH - Mammalian Gene Collection (MGC) project"/>
        </authorList>
    </citation>
    <scope>NUCLEOTIDE SEQUENCE [LARGE SCALE MRNA]</scope>
    <source>
        <strain>Hereford</strain>
        <tissue>Heart ventricle</tissue>
    </source>
</reference>
<accession>Q3ZBL5</accession>
<accession>Q05KI4</accession>
<accession>Q5BIN3</accession>
<dbReference type="EC" id="3.1.1.29" evidence="2"/>
<dbReference type="EMBL" id="AB238942">
    <property type="protein sequence ID" value="BAF35578.1"/>
    <property type="molecule type" value="mRNA"/>
</dbReference>
<dbReference type="EMBL" id="BT021191">
    <property type="protein sequence ID" value="AAX31373.1"/>
    <property type="molecule type" value="mRNA"/>
</dbReference>
<dbReference type="EMBL" id="BC103230">
    <property type="protein sequence ID" value="AAI03231.1"/>
    <property type="molecule type" value="mRNA"/>
</dbReference>
<dbReference type="RefSeq" id="NP_001029691.1">
    <property type="nucleotide sequence ID" value="NM_001034519.1"/>
</dbReference>
<dbReference type="RefSeq" id="XP_005219951.1">
    <property type="nucleotide sequence ID" value="XM_005219894.5"/>
</dbReference>
<dbReference type="SMR" id="Q3ZBL5"/>
<dbReference type="FunCoup" id="Q3ZBL5">
    <property type="interactions" value="3774"/>
</dbReference>
<dbReference type="STRING" id="9913.ENSBTAP00000022212"/>
<dbReference type="PaxDb" id="9913-ENSBTAP00000022212"/>
<dbReference type="PeptideAtlas" id="Q3ZBL5"/>
<dbReference type="Ensembl" id="ENSBTAT00000022212.4">
    <property type="protein sequence ID" value="ENSBTAP00000022212.2"/>
    <property type="gene ID" value="ENSBTAG00000055796.1"/>
</dbReference>
<dbReference type="Ensembl" id="ENSBTAT00000096422.1">
    <property type="protein sequence ID" value="ENSBTAP00000085563.1"/>
    <property type="gene ID" value="ENSBTAG00000055796.1"/>
</dbReference>
<dbReference type="Ensembl" id="ENSBTAT00000133966.1">
    <property type="protein sequence ID" value="ENSBTAP00000103724.1"/>
    <property type="gene ID" value="ENSBTAG00000055796.1"/>
</dbReference>
<dbReference type="Ensembl" id="ENSBTAT00000135417.1">
    <property type="protein sequence ID" value="ENSBTAP00000083810.1"/>
    <property type="gene ID" value="ENSBTAG00000055796.1"/>
</dbReference>
<dbReference type="GeneID" id="516595"/>
<dbReference type="KEGG" id="bta:516595"/>
<dbReference type="CTD" id="51651"/>
<dbReference type="VEuPathDB" id="HostDB:ENSBTAG00000016710"/>
<dbReference type="eggNOG" id="KOG3282">
    <property type="taxonomic scope" value="Eukaryota"/>
</dbReference>
<dbReference type="GeneTree" id="ENSGT00390000015991"/>
<dbReference type="HOGENOM" id="CLU_073661_1_1_1"/>
<dbReference type="InParanoid" id="Q3ZBL5"/>
<dbReference type="OMA" id="GHAAVEC"/>
<dbReference type="OrthoDB" id="1733656at2759"/>
<dbReference type="TreeFam" id="TF324583"/>
<dbReference type="Reactome" id="R-BTA-5689880">
    <property type="pathway name" value="Ub-specific processing proteases"/>
</dbReference>
<dbReference type="Proteomes" id="UP000009136">
    <property type="component" value="Chromosome 19"/>
</dbReference>
<dbReference type="Bgee" id="ENSBTAG00000016710">
    <property type="expression patterns" value="Expressed in semen and 105 other cell types or tissues"/>
</dbReference>
<dbReference type="GO" id="GO:0005829">
    <property type="term" value="C:cytosol"/>
    <property type="evidence" value="ECO:0000318"/>
    <property type="project" value="GO_Central"/>
</dbReference>
<dbReference type="GO" id="GO:0005741">
    <property type="term" value="C:mitochondrial outer membrane"/>
    <property type="evidence" value="ECO:0000250"/>
    <property type="project" value="UniProtKB"/>
</dbReference>
<dbReference type="GO" id="GO:0004045">
    <property type="term" value="F:peptidyl-tRNA hydrolase activity"/>
    <property type="evidence" value="ECO:0000318"/>
    <property type="project" value="GO_Central"/>
</dbReference>
<dbReference type="GO" id="GO:2000811">
    <property type="term" value="P:negative regulation of anoikis"/>
    <property type="evidence" value="ECO:0000318"/>
    <property type="project" value="GO_Central"/>
</dbReference>
<dbReference type="GO" id="GO:2000210">
    <property type="term" value="P:positive regulation of anoikis"/>
    <property type="evidence" value="ECO:0000318"/>
    <property type="project" value="GO_Central"/>
</dbReference>
<dbReference type="CDD" id="cd02430">
    <property type="entry name" value="PTH2"/>
    <property type="match status" value="1"/>
</dbReference>
<dbReference type="FunFam" id="3.40.1490.10:FF:000001">
    <property type="entry name" value="Peptidyl-tRNA hydrolase 2"/>
    <property type="match status" value="1"/>
</dbReference>
<dbReference type="Gene3D" id="3.40.1490.10">
    <property type="entry name" value="Bit1"/>
    <property type="match status" value="1"/>
</dbReference>
<dbReference type="InterPro" id="IPR023476">
    <property type="entry name" value="Pep_tRNA_hydro_II_dom_sf"/>
</dbReference>
<dbReference type="InterPro" id="IPR002833">
    <property type="entry name" value="PTH2"/>
</dbReference>
<dbReference type="NCBIfam" id="TIGR00283">
    <property type="entry name" value="arch_pth2"/>
    <property type="match status" value="1"/>
</dbReference>
<dbReference type="NCBIfam" id="NF003314">
    <property type="entry name" value="PRK04322.1"/>
    <property type="match status" value="1"/>
</dbReference>
<dbReference type="PANTHER" id="PTHR12649">
    <property type="entry name" value="PEPTIDYL-TRNA HYDROLASE 2"/>
    <property type="match status" value="1"/>
</dbReference>
<dbReference type="PANTHER" id="PTHR12649:SF11">
    <property type="entry name" value="PEPTIDYL-TRNA HYDROLASE 2, MITOCHONDRIAL"/>
    <property type="match status" value="1"/>
</dbReference>
<dbReference type="Pfam" id="PF01981">
    <property type="entry name" value="PTH2"/>
    <property type="match status" value="1"/>
</dbReference>
<dbReference type="SUPFAM" id="SSF102462">
    <property type="entry name" value="Peptidyl-tRNA hydrolase II"/>
    <property type="match status" value="1"/>
</dbReference>